<sequence length="124" mass="12695">MADLAKIVEDLSSLTVLEAAELSKLLEEKWGVSAAAPVAVAAAGGGAAAVVEEEKTEFDVILTDAGANKINVIKEVRAITGLGLKEAKDLVEGAPKAVKEAVSKAEAADLKKKLEDAGAKVDVK</sequence>
<reference key="1">
    <citation type="journal article" date="2009" name="J. Bacteriol.">
        <title>Genome sequences of three Agrobacterium biovars help elucidate the evolution of multichromosome genomes in bacteria.</title>
        <authorList>
            <person name="Slater S.C."/>
            <person name="Goldman B.S."/>
            <person name="Goodner B."/>
            <person name="Setubal J.C."/>
            <person name="Farrand S.K."/>
            <person name="Nester E.W."/>
            <person name="Burr T.J."/>
            <person name="Banta L."/>
            <person name="Dickerman A.W."/>
            <person name="Paulsen I."/>
            <person name="Otten L."/>
            <person name="Suen G."/>
            <person name="Welch R."/>
            <person name="Almeida N.F."/>
            <person name="Arnold F."/>
            <person name="Burton O.T."/>
            <person name="Du Z."/>
            <person name="Ewing A."/>
            <person name="Godsy E."/>
            <person name="Heisel S."/>
            <person name="Houmiel K.L."/>
            <person name="Jhaveri J."/>
            <person name="Lu J."/>
            <person name="Miller N.M."/>
            <person name="Norton S."/>
            <person name="Chen Q."/>
            <person name="Phoolcharoen W."/>
            <person name="Ohlin V."/>
            <person name="Ondrusek D."/>
            <person name="Pride N."/>
            <person name="Stricklin S.L."/>
            <person name="Sun J."/>
            <person name="Wheeler C."/>
            <person name="Wilson L."/>
            <person name="Zhu H."/>
            <person name="Wood D.W."/>
        </authorList>
    </citation>
    <scope>NUCLEOTIDE SEQUENCE [LARGE SCALE GENOMIC DNA]</scope>
    <source>
        <strain>ATCC BAA-846 / DSM 112012 / S4</strain>
    </source>
</reference>
<feature type="chain" id="PRO_1000195762" description="Large ribosomal subunit protein bL12">
    <location>
        <begin position="1"/>
        <end position="124"/>
    </location>
</feature>
<dbReference type="EMBL" id="CP000633">
    <property type="protein sequence ID" value="ACM36307.1"/>
    <property type="molecule type" value="Genomic_DNA"/>
</dbReference>
<dbReference type="RefSeq" id="WP_015915730.1">
    <property type="nucleotide sequence ID" value="NC_011989.1"/>
</dbReference>
<dbReference type="SMR" id="B9JVM7"/>
<dbReference type="STRING" id="311402.Avi_1823"/>
<dbReference type="KEGG" id="avi:Avi_1823"/>
<dbReference type="eggNOG" id="COG0222">
    <property type="taxonomic scope" value="Bacteria"/>
</dbReference>
<dbReference type="HOGENOM" id="CLU_086499_3_0_5"/>
<dbReference type="Proteomes" id="UP000001596">
    <property type="component" value="Chromosome 1"/>
</dbReference>
<dbReference type="GO" id="GO:0022625">
    <property type="term" value="C:cytosolic large ribosomal subunit"/>
    <property type="evidence" value="ECO:0007669"/>
    <property type="project" value="TreeGrafter"/>
</dbReference>
<dbReference type="GO" id="GO:0003729">
    <property type="term" value="F:mRNA binding"/>
    <property type="evidence" value="ECO:0007669"/>
    <property type="project" value="TreeGrafter"/>
</dbReference>
<dbReference type="GO" id="GO:0003735">
    <property type="term" value="F:structural constituent of ribosome"/>
    <property type="evidence" value="ECO:0007669"/>
    <property type="project" value="InterPro"/>
</dbReference>
<dbReference type="GO" id="GO:0006412">
    <property type="term" value="P:translation"/>
    <property type="evidence" value="ECO:0007669"/>
    <property type="project" value="UniProtKB-UniRule"/>
</dbReference>
<dbReference type="CDD" id="cd00387">
    <property type="entry name" value="Ribosomal_L7_L12"/>
    <property type="match status" value="1"/>
</dbReference>
<dbReference type="FunFam" id="1.20.5.710:FF:000007">
    <property type="entry name" value="50S ribosomal protein L7/L12"/>
    <property type="match status" value="1"/>
</dbReference>
<dbReference type="FunFam" id="3.30.1390.10:FF:000001">
    <property type="entry name" value="50S ribosomal protein L7/L12"/>
    <property type="match status" value="1"/>
</dbReference>
<dbReference type="Gene3D" id="3.30.1390.10">
    <property type="match status" value="1"/>
</dbReference>
<dbReference type="Gene3D" id="1.20.5.710">
    <property type="entry name" value="Single helix bin"/>
    <property type="match status" value="1"/>
</dbReference>
<dbReference type="HAMAP" id="MF_00368">
    <property type="entry name" value="Ribosomal_bL12"/>
    <property type="match status" value="1"/>
</dbReference>
<dbReference type="InterPro" id="IPR000206">
    <property type="entry name" value="Ribosomal_bL12"/>
</dbReference>
<dbReference type="InterPro" id="IPR013823">
    <property type="entry name" value="Ribosomal_bL12_C"/>
</dbReference>
<dbReference type="InterPro" id="IPR014719">
    <property type="entry name" value="Ribosomal_bL12_C/ClpS-like"/>
</dbReference>
<dbReference type="InterPro" id="IPR008932">
    <property type="entry name" value="Ribosomal_bL12_oligo"/>
</dbReference>
<dbReference type="InterPro" id="IPR036235">
    <property type="entry name" value="Ribosomal_bL12_oligo_N_sf"/>
</dbReference>
<dbReference type="NCBIfam" id="TIGR00855">
    <property type="entry name" value="L12"/>
    <property type="match status" value="1"/>
</dbReference>
<dbReference type="PANTHER" id="PTHR45987">
    <property type="entry name" value="39S RIBOSOMAL PROTEIN L12"/>
    <property type="match status" value="1"/>
</dbReference>
<dbReference type="PANTHER" id="PTHR45987:SF4">
    <property type="entry name" value="LARGE RIBOSOMAL SUBUNIT PROTEIN BL12M"/>
    <property type="match status" value="1"/>
</dbReference>
<dbReference type="Pfam" id="PF00542">
    <property type="entry name" value="Ribosomal_L12"/>
    <property type="match status" value="1"/>
</dbReference>
<dbReference type="Pfam" id="PF16320">
    <property type="entry name" value="Ribosomal_L12_N"/>
    <property type="match status" value="1"/>
</dbReference>
<dbReference type="SUPFAM" id="SSF54736">
    <property type="entry name" value="ClpS-like"/>
    <property type="match status" value="1"/>
</dbReference>
<dbReference type="SUPFAM" id="SSF48300">
    <property type="entry name" value="Ribosomal protein L7/12, oligomerisation (N-terminal) domain"/>
    <property type="match status" value="1"/>
</dbReference>
<comment type="function">
    <text evidence="1">Forms part of the ribosomal stalk which helps the ribosome interact with GTP-bound translation factors. Is thus essential for accurate translation.</text>
</comment>
<comment type="subunit">
    <text evidence="1">Homodimer. Part of the ribosomal stalk of the 50S ribosomal subunit. Forms a multimeric L10(L12)X complex, where L10 forms an elongated spine to which 2 to 4 L12 dimers bind in a sequential fashion. Binds GTP-bound translation factors.</text>
</comment>
<comment type="similarity">
    <text evidence="1">Belongs to the bacterial ribosomal protein bL12 family.</text>
</comment>
<keyword id="KW-1185">Reference proteome</keyword>
<keyword id="KW-0687">Ribonucleoprotein</keyword>
<keyword id="KW-0689">Ribosomal protein</keyword>
<proteinExistence type="inferred from homology"/>
<accession>B9JVM7</accession>
<gene>
    <name evidence="1" type="primary">rplL</name>
    <name type="ordered locus">Avi_1823</name>
</gene>
<organism>
    <name type="scientific">Allorhizobium ampelinum (strain ATCC BAA-846 / DSM 112012 / S4)</name>
    <name type="common">Agrobacterium vitis (strain S4)</name>
    <dbReference type="NCBI Taxonomy" id="311402"/>
    <lineage>
        <taxon>Bacteria</taxon>
        <taxon>Pseudomonadati</taxon>
        <taxon>Pseudomonadota</taxon>
        <taxon>Alphaproteobacteria</taxon>
        <taxon>Hyphomicrobiales</taxon>
        <taxon>Rhizobiaceae</taxon>
        <taxon>Rhizobium/Agrobacterium group</taxon>
        <taxon>Allorhizobium</taxon>
        <taxon>Allorhizobium ampelinum</taxon>
    </lineage>
</organism>
<evidence type="ECO:0000255" key="1">
    <source>
        <dbReference type="HAMAP-Rule" id="MF_00368"/>
    </source>
</evidence>
<evidence type="ECO:0000305" key="2"/>
<name>RL7_ALLAM</name>
<protein>
    <recommendedName>
        <fullName evidence="1">Large ribosomal subunit protein bL12</fullName>
    </recommendedName>
    <alternativeName>
        <fullName evidence="2">50S ribosomal protein L7/L12</fullName>
    </alternativeName>
</protein>